<proteinExistence type="evidence at transcript level"/>
<sequence>MDLDNIEGLNEVRLAVYRAALKLRSLQKLCQMNLVLLQDLRPILNTLWSSGESTISLAQEDVQQHLEELFRSISPELPDQAVTEATDQTTRLLFKLFDRGQTGVILLRSVEAALIALCGDTLSAKQRALFRLAESYSGNQESDRGSISRSALRVLLEDLSQVPAVVQENHVFGHAETAVSSCFNGVISAGVTEEHFIWWLQSEPRLLLWLSTLYRISVSEAVQHRVHCHACKAFPITGLRYRCLKCLNVHLCQSCFLTERRSRKHKPSHSVLEYCTQPSWKESMASLASSARHALVPRHTRREAERKRALRAGSSAELRYSASNPALQFAAYADTHDAAAEASQTAAPAAVTVESKSLQTEEIQIPQRETAELQKDISVTQKAMRDLQRDKWLLEKEFQVWRVAAQSEHDSLEDKCSELKSMMETLNQHNQHLEEELDTVRHLLSLRHKEELKTSHSNLQLEQDGSINENNWTQPGLLKPHESSSTEHEVEERGTRQERRFEEEEDTLYDLSEDISTNLDDSESILPQDVHTALAQREEEELQEEEEGLHEKEEGLPTEEEELQHDRQDPSFFHGCMSDFAPDGHSDDSEMDDEEDLCELVQRLRNELSLYTASGSVCLQKEMLMTAAEGVRDSVSHLVTSVKSSSLA</sequence>
<gene>
    <name type="primary">dytn</name>
</gene>
<name>DYTN_DANRE</name>
<comment type="subcellular location">
    <subcellularLocation>
        <location evidence="1">Cell membrane</location>
    </subcellularLocation>
</comment>
<evidence type="ECO:0000250" key="1"/>
<evidence type="ECO:0000255" key="2"/>
<evidence type="ECO:0000255" key="3">
    <source>
        <dbReference type="PROSITE-ProRule" id="PRU00228"/>
    </source>
</evidence>
<evidence type="ECO:0000256" key="4">
    <source>
        <dbReference type="SAM" id="MobiDB-lite"/>
    </source>
</evidence>
<keyword id="KW-1003">Cell membrane</keyword>
<keyword id="KW-0175">Coiled coil</keyword>
<keyword id="KW-0472">Membrane</keyword>
<keyword id="KW-0479">Metal-binding</keyword>
<keyword id="KW-1185">Reference proteome</keyword>
<keyword id="KW-0862">Zinc</keyword>
<keyword id="KW-0863">Zinc-finger</keyword>
<reference key="1">
    <citation type="journal article" date="2007" name="BMC Genomics">
        <title>The dystrotelin, dystrophin and dystrobrevin superfamily: new paralogues and old isoforms.</title>
        <authorList>
            <person name="Jin H."/>
            <person name="Tan S."/>
            <person name="Hermanowski J."/>
            <person name="Boehm S."/>
            <person name="Pacheco S."/>
            <person name="McCauley J.M."/>
            <person name="Greener M.J."/>
            <person name="Hinits Y."/>
            <person name="Hughes S.M."/>
            <person name="Sharpe P.T."/>
            <person name="Roberts R.G."/>
        </authorList>
    </citation>
    <scope>NUCLEOTIDE SEQUENCE [MRNA]</scope>
</reference>
<protein>
    <recommendedName>
        <fullName>Dystrotelin</fullName>
    </recommendedName>
</protein>
<accession>A2CI97</accession>
<dbReference type="EMBL" id="DQ443726">
    <property type="protein sequence ID" value="ABD98314.1"/>
    <property type="molecule type" value="mRNA"/>
</dbReference>
<dbReference type="RefSeq" id="NP_001074056.1">
    <property type="nucleotide sequence ID" value="NM_001080587.1"/>
</dbReference>
<dbReference type="RefSeq" id="XP_009300510.1">
    <property type="nucleotide sequence ID" value="XM_009302235.4"/>
</dbReference>
<dbReference type="SMR" id="A2CI97"/>
<dbReference type="STRING" id="7955.ENSDARP00000095514"/>
<dbReference type="PaxDb" id="7955-ENSDARP00000095514"/>
<dbReference type="Ensembl" id="ENSDART00000104744">
    <property type="protein sequence ID" value="ENSDARP00000095514"/>
    <property type="gene ID" value="ENSDARG00000071025"/>
</dbReference>
<dbReference type="GeneID" id="563097"/>
<dbReference type="KEGG" id="dre:563097"/>
<dbReference type="AGR" id="ZFIN:ZDB-GENE-070124-2"/>
<dbReference type="CTD" id="391475"/>
<dbReference type="ZFIN" id="ZDB-GENE-070124-2">
    <property type="gene designation" value="dytn"/>
</dbReference>
<dbReference type="eggNOG" id="KOG4286">
    <property type="taxonomic scope" value="Eukaryota"/>
</dbReference>
<dbReference type="HOGENOM" id="CLU_027773_0_0_1"/>
<dbReference type="InParanoid" id="A2CI97"/>
<dbReference type="OrthoDB" id="10014385at2759"/>
<dbReference type="PhylomeDB" id="A2CI97"/>
<dbReference type="TreeFam" id="TF343849"/>
<dbReference type="PRO" id="PR:A2CI97"/>
<dbReference type="Proteomes" id="UP000000437">
    <property type="component" value="Chromosome 6"/>
</dbReference>
<dbReference type="Bgee" id="ENSDARG00000071025">
    <property type="expression patterns" value="Expressed in testis and 17 other cell types or tissues"/>
</dbReference>
<dbReference type="ExpressionAtlas" id="A2CI97">
    <property type="expression patterns" value="baseline and differential"/>
</dbReference>
<dbReference type="GO" id="GO:0005886">
    <property type="term" value="C:plasma membrane"/>
    <property type="evidence" value="ECO:0000318"/>
    <property type="project" value="GO_Central"/>
</dbReference>
<dbReference type="GO" id="GO:0045202">
    <property type="term" value="C:synapse"/>
    <property type="evidence" value="ECO:0007669"/>
    <property type="project" value="GOC"/>
</dbReference>
<dbReference type="GO" id="GO:0008270">
    <property type="term" value="F:zinc ion binding"/>
    <property type="evidence" value="ECO:0007669"/>
    <property type="project" value="UniProtKB-KW"/>
</dbReference>
<dbReference type="GO" id="GO:0099536">
    <property type="term" value="P:synaptic signaling"/>
    <property type="evidence" value="ECO:0000318"/>
    <property type="project" value="GO_Central"/>
</dbReference>
<dbReference type="CDD" id="cd16243">
    <property type="entry name" value="EFh_DYTN"/>
    <property type="match status" value="1"/>
</dbReference>
<dbReference type="Gene3D" id="3.30.60.90">
    <property type="match status" value="1"/>
</dbReference>
<dbReference type="Gene3D" id="6.10.140.70">
    <property type="match status" value="1"/>
</dbReference>
<dbReference type="Gene3D" id="1.10.238.10">
    <property type="entry name" value="EF-hand"/>
    <property type="match status" value="1"/>
</dbReference>
<dbReference type="InterPro" id="IPR011992">
    <property type="entry name" value="EF-hand-dom_pair"/>
</dbReference>
<dbReference type="InterPro" id="IPR015153">
    <property type="entry name" value="EF-hand_dom_typ1"/>
</dbReference>
<dbReference type="InterPro" id="IPR015154">
    <property type="entry name" value="EF-hand_dom_typ2"/>
</dbReference>
<dbReference type="InterPro" id="IPR050774">
    <property type="entry name" value="KCMF1/Dystrophin"/>
</dbReference>
<dbReference type="InterPro" id="IPR000433">
    <property type="entry name" value="Znf_ZZ"/>
</dbReference>
<dbReference type="InterPro" id="IPR043145">
    <property type="entry name" value="Znf_ZZ_sf"/>
</dbReference>
<dbReference type="PANTHER" id="PTHR12268:SF18">
    <property type="entry name" value="DYSTROTELIN"/>
    <property type="match status" value="1"/>
</dbReference>
<dbReference type="PANTHER" id="PTHR12268">
    <property type="entry name" value="E3 UBIQUITIN-PROTEIN LIGASE KCMF1"/>
    <property type="match status" value="1"/>
</dbReference>
<dbReference type="Pfam" id="PF09068">
    <property type="entry name" value="EF-hand_2"/>
    <property type="match status" value="1"/>
</dbReference>
<dbReference type="Pfam" id="PF09069">
    <property type="entry name" value="EF-hand_3"/>
    <property type="match status" value="1"/>
</dbReference>
<dbReference type="Pfam" id="PF00569">
    <property type="entry name" value="ZZ"/>
    <property type="match status" value="1"/>
</dbReference>
<dbReference type="SMART" id="SM00291">
    <property type="entry name" value="ZnF_ZZ"/>
    <property type="match status" value="1"/>
</dbReference>
<dbReference type="SUPFAM" id="SSF47473">
    <property type="entry name" value="EF-hand"/>
    <property type="match status" value="2"/>
</dbReference>
<dbReference type="SUPFAM" id="SSF57850">
    <property type="entry name" value="RING/U-box"/>
    <property type="match status" value="1"/>
</dbReference>
<dbReference type="PROSITE" id="PS01357">
    <property type="entry name" value="ZF_ZZ_1"/>
    <property type="match status" value="1"/>
</dbReference>
<dbReference type="PROSITE" id="PS50135">
    <property type="entry name" value="ZF_ZZ_2"/>
    <property type="match status" value="1"/>
</dbReference>
<organism>
    <name type="scientific">Danio rerio</name>
    <name type="common">Zebrafish</name>
    <name type="synonym">Brachydanio rerio</name>
    <dbReference type="NCBI Taxonomy" id="7955"/>
    <lineage>
        <taxon>Eukaryota</taxon>
        <taxon>Metazoa</taxon>
        <taxon>Chordata</taxon>
        <taxon>Craniata</taxon>
        <taxon>Vertebrata</taxon>
        <taxon>Euteleostomi</taxon>
        <taxon>Actinopterygii</taxon>
        <taxon>Neopterygii</taxon>
        <taxon>Teleostei</taxon>
        <taxon>Ostariophysi</taxon>
        <taxon>Cypriniformes</taxon>
        <taxon>Danionidae</taxon>
        <taxon>Danioninae</taxon>
        <taxon>Danio</taxon>
    </lineage>
</organism>
<feature type="chain" id="PRO_0000298936" description="Dystrotelin">
    <location>
        <begin position="1"/>
        <end position="648"/>
    </location>
</feature>
<feature type="zinc finger region" description="ZZ-type" evidence="3">
    <location>
        <begin position="223"/>
        <end position="279"/>
    </location>
</feature>
<feature type="region of interest" description="Disordered" evidence="4">
    <location>
        <begin position="455"/>
        <end position="509"/>
    </location>
</feature>
<feature type="region of interest" description="Disordered" evidence="4">
    <location>
        <begin position="536"/>
        <end position="557"/>
    </location>
</feature>
<feature type="coiled-coil region" evidence="2">
    <location>
        <begin position="367"/>
        <end position="446"/>
    </location>
</feature>
<feature type="compositionally biased region" description="Polar residues" evidence="4">
    <location>
        <begin position="455"/>
        <end position="474"/>
    </location>
</feature>
<feature type="compositionally biased region" description="Basic and acidic residues" evidence="4">
    <location>
        <begin position="479"/>
        <end position="502"/>
    </location>
</feature>
<feature type="compositionally biased region" description="Acidic residues" evidence="4">
    <location>
        <begin position="538"/>
        <end position="548"/>
    </location>
</feature>
<feature type="binding site" evidence="3">
    <location>
        <position position="228"/>
    </location>
    <ligand>
        <name>Zn(2+)</name>
        <dbReference type="ChEBI" id="CHEBI:29105"/>
        <label>1</label>
    </ligand>
</feature>
<feature type="binding site" evidence="3">
    <location>
        <position position="231"/>
    </location>
    <ligand>
        <name>Zn(2+)</name>
        <dbReference type="ChEBI" id="CHEBI:29105"/>
        <label>1</label>
    </ligand>
</feature>
<feature type="binding site" evidence="3">
    <location>
        <position position="243"/>
    </location>
    <ligand>
        <name>Zn(2+)</name>
        <dbReference type="ChEBI" id="CHEBI:29105"/>
        <label>2</label>
    </ligand>
</feature>
<feature type="binding site" evidence="3">
    <location>
        <position position="246"/>
    </location>
    <ligand>
        <name>Zn(2+)</name>
        <dbReference type="ChEBI" id="CHEBI:29105"/>
        <label>2</label>
    </ligand>
</feature>
<feature type="binding site" evidence="3">
    <location>
        <position position="252"/>
    </location>
    <ligand>
        <name>Zn(2+)</name>
        <dbReference type="ChEBI" id="CHEBI:29105"/>
        <label>1</label>
    </ligand>
</feature>
<feature type="binding site" evidence="3">
    <location>
        <position position="255"/>
    </location>
    <ligand>
        <name>Zn(2+)</name>
        <dbReference type="ChEBI" id="CHEBI:29105"/>
        <label>1</label>
    </ligand>
</feature>
<feature type="binding site" evidence="3">
    <location>
        <position position="265"/>
    </location>
    <ligand>
        <name>Zn(2+)</name>
        <dbReference type="ChEBI" id="CHEBI:29105"/>
        <label>2</label>
    </ligand>
</feature>
<feature type="binding site" evidence="3">
    <location>
        <position position="269"/>
    </location>
    <ligand>
        <name>Zn(2+)</name>
        <dbReference type="ChEBI" id="CHEBI:29105"/>
        <label>2</label>
    </ligand>
</feature>